<name>AB28G_ARATH</name>
<reference key="1">
    <citation type="journal article" date="1997" name="DNA Res.">
        <title>Structural analysis of Arabidopsis thaliana chromosome 5. I. Sequence features of the 1.6 Mb regions covered by twenty physically assigned P1 clones.</title>
        <authorList>
            <person name="Sato S."/>
            <person name="Kotani H."/>
            <person name="Nakamura Y."/>
            <person name="Kaneko T."/>
            <person name="Asamizu E."/>
            <person name="Fukami M."/>
            <person name="Miyajima N."/>
            <person name="Tabata S."/>
        </authorList>
    </citation>
    <scope>NUCLEOTIDE SEQUENCE [LARGE SCALE GENOMIC DNA]</scope>
    <source>
        <strain>cv. Columbia</strain>
    </source>
</reference>
<reference key="2">
    <citation type="journal article" date="2017" name="Plant J.">
        <title>Araport11: a complete reannotation of the Arabidopsis thaliana reference genome.</title>
        <authorList>
            <person name="Cheng C.Y."/>
            <person name="Krishnakumar V."/>
            <person name="Chan A.P."/>
            <person name="Thibaud-Nissen F."/>
            <person name="Schobel S."/>
            <person name="Town C.D."/>
        </authorList>
    </citation>
    <scope>GENOME REANNOTATION</scope>
    <source>
        <strain>cv. Columbia</strain>
    </source>
</reference>
<reference key="3">
    <citation type="journal article" date="2001" name="J. Biol. Chem.">
        <title>The Arabidopsis thaliana ABC protein superfamily, a complete inventory.</title>
        <authorList>
            <person name="Sanchez-Fernandez R."/>
            <person name="Davies T.G."/>
            <person name="Coleman J.O."/>
            <person name="Rea P.A."/>
        </authorList>
    </citation>
    <scope>GENE FAMILY</scope>
    <scope>NOMENCLATURE</scope>
</reference>
<reference key="4">
    <citation type="journal article" date="2008" name="Trends Plant Sci.">
        <title>Plant ABC proteins - a unified nomenclature and updated inventory.</title>
        <authorList>
            <person name="Verrier P.J."/>
            <person name="Bird D."/>
            <person name="Burla B."/>
            <person name="Dassa E."/>
            <person name="Forestier C."/>
            <person name="Geisler M."/>
            <person name="Klein M."/>
            <person name="Kolukisaoglu H.U."/>
            <person name="Lee Y."/>
            <person name="Martinoia E."/>
            <person name="Murphy A."/>
            <person name="Rea P.A."/>
            <person name="Samuels L."/>
            <person name="Schulz B."/>
            <person name="Spalding E.J."/>
            <person name="Yazaki K."/>
            <person name="Theodoulou F.L."/>
        </authorList>
    </citation>
    <scope>GENE FAMILY</scope>
    <scope>NOMENCLATURE</scope>
</reference>
<protein>
    <recommendedName>
        <fullName>ABC transporter G family member 28</fullName>
        <shortName>ABC transporter ABCG.28</shortName>
        <shortName>AtABCG28</shortName>
    </recommendedName>
    <alternativeName>
        <fullName>Putative white-brown complex homolog protein 29</fullName>
        <shortName>AtWBC29</shortName>
    </alternativeName>
</protein>
<gene>
    <name type="primary">ABCG28</name>
    <name type="synonym">WBC29</name>
    <name type="ordered locus">At5g60740</name>
    <name type="ORF">MUP24.16</name>
</gene>
<accession>Q9FF46</accession>
<comment type="subcellular location">
    <subcellularLocation>
        <location evidence="1">Membrane</location>
        <topology evidence="1">Multi-pass membrane protein</topology>
    </subcellularLocation>
</comment>
<comment type="similarity">
    <text evidence="5">Belongs to the ABC transporter superfamily. ABCG family. Eye pigment precursor importer (TC 3.A.1.204) subfamily.</text>
</comment>
<organism>
    <name type="scientific">Arabidopsis thaliana</name>
    <name type="common">Mouse-ear cress</name>
    <dbReference type="NCBI Taxonomy" id="3702"/>
    <lineage>
        <taxon>Eukaryota</taxon>
        <taxon>Viridiplantae</taxon>
        <taxon>Streptophyta</taxon>
        <taxon>Embryophyta</taxon>
        <taxon>Tracheophyta</taxon>
        <taxon>Spermatophyta</taxon>
        <taxon>Magnoliopsida</taxon>
        <taxon>eudicotyledons</taxon>
        <taxon>Gunneridae</taxon>
        <taxon>Pentapetalae</taxon>
        <taxon>rosids</taxon>
        <taxon>malvids</taxon>
        <taxon>Brassicales</taxon>
        <taxon>Brassicaceae</taxon>
        <taxon>Camelineae</taxon>
        <taxon>Arabidopsis</taxon>
    </lineage>
</organism>
<keyword id="KW-0067">ATP-binding</keyword>
<keyword id="KW-0472">Membrane</keyword>
<keyword id="KW-0547">Nucleotide-binding</keyword>
<keyword id="KW-1185">Reference proteome</keyword>
<keyword id="KW-0812">Transmembrane</keyword>
<keyword id="KW-1133">Transmembrane helix</keyword>
<keyword id="KW-0813">Transport</keyword>
<dbReference type="EMBL" id="AB005246">
    <property type="protein sequence ID" value="BAB09847.1"/>
    <property type="molecule type" value="Genomic_DNA"/>
</dbReference>
<dbReference type="EMBL" id="CP002688">
    <property type="protein sequence ID" value="AED97372.1"/>
    <property type="molecule type" value="Genomic_DNA"/>
</dbReference>
<dbReference type="RefSeq" id="NP_200882.4">
    <property type="nucleotide sequence ID" value="NM_125467.5"/>
</dbReference>
<dbReference type="SMR" id="Q9FF46"/>
<dbReference type="BioGRID" id="21439">
    <property type="interactions" value="1"/>
</dbReference>
<dbReference type="FunCoup" id="Q9FF46">
    <property type="interactions" value="1"/>
</dbReference>
<dbReference type="STRING" id="3702.Q9FF46"/>
<dbReference type="TCDB" id="3.A.1.204.38">
    <property type="family name" value="the atp-binding cassette (abc) superfamily"/>
</dbReference>
<dbReference type="PaxDb" id="3702-AT5G60740.1"/>
<dbReference type="ProteomicsDB" id="245115"/>
<dbReference type="EnsemblPlants" id="AT5G60740.1">
    <property type="protein sequence ID" value="AT5G60740.1"/>
    <property type="gene ID" value="AT5G60740"/>
</dbReference>
<dbReference type="GeneID" id="836195"/>
<dbReference type="Gramene" id="AT5G60740.1">
    <property type="protein sequence ID" value="AT5G60740.1"/>
    <property type="gene ID" value="AT5G60740"/>
</dbReference>
<dbReference type="KEGG" id="ath:AT5G60740"/>
<dbReference type="Araport" id="AT5G60740"/>
<dbReference type="TAIR" id="AT5G60740">
    <property type="gene designation" value="ABCG28"/>
</dbReference>
<dbReference type="eggNOG" id="KOG0061">
    <property type="taxonomic scope" value="Eukaryota"/>
</dbReference>
<dbReference type="HOGENOM" id="CLU_000604_57_0_1"/>
<dbReference type="InParanoid" id="Q9FF46"/>
<dbReference type="OMA" id="AFFCMIT"/>
<dbReference type="PhylomeDB" id="Q9FF46"/>
<dbReference type="PRO" id="PR:Q9FF46"/>
<dbReference type="Proteomes" id="UP000006548">
    <property type="component" value="Chromosome 5"/>
</dbReference>
<dbReference type="ExpressionAtlas" id="Q9FF46">
    <property type="expression patterns" value="baseline and differential"/>
</dbReference>
<dbReference type="GO" id="GO:0016020">
    <property type="term" value="C:membrane"/>
    <property type="evidence" value="ECO:0007669"/>
    <property type="project" value="UniProtKB-SubCell"/>
</dbReference>
<dbReference type="GO" id="GO:0090404">
    <property type="term" value="C:pollen tube tip"/>
    <property type="evidence" value="ECO:0000314"/>
    <property type="project" value="TAIR"/>
</dbReference>
<dbReference type="GO" id="GO:0099503">
    <property type="term" value="C:secretory vesicle"/>
    <property type="evidence" value="ECO:0000314"/>
    <property type="project" value="TAIR"/>
</dbReference>
<dbReference type="GO" id="GO:0140359">
    <property type="term" value="F:ABC-type transporter activity"/>
    <property type="evidence" value="ECO:0007669"/>
    <property type="project" value="InterPro"/>
</dbReference>
<dbReference type="GO" id="GO:0005524">
    <property type="term" value="F:ATP binding"/>
    <property type="evidence" value="ECO:0007669"/>
    <property type="project" value="UniProtKB-KW"/>
</dbReference>
<dbReference type="GO" id="GO:0016887">
    <property type="term" value="F:ATP hydrolysis activity"/>
    <property type="evidence" value="ECO:0007669"/>
    <property type="project" value="InterPro"/>
</dbReference>
<dbReference type="GO" id="GO:0009860">
    <property type="term" value="P:pollen tube growth"/>
    <property type="evidence" value="ECO:0000315"/>
    <property type="project" value="TAIR"/>
</dbReference>
<dbReference type="GO" id="GO:0015846">
    <property type="term" value="P:polyamine transport"/>
    <property type="evidence" value="ECO:0000315"/>
    <property type="project" value="TAIR"/>
</dbReference>
<dbReference type="CDD" id="cd03213">
    <property type="entry name" value="ABCG_EPDR"/>
    <property type="match status" value="1"/>
</dbReference>
<dbReference type="FunFam" id="3.40.50.300:FF:000367">
    <property type="entry name" value="ABC transporter G family member 24"/>
    <property type="match status" value="1"/>
</dbReference>
<dbReference type="Gene3D" id="3.40.50.300">
    <property type="entry name" value="P-loop containing nucleotide triphosphate hydrolases"/>
    <property type="match status" value="1"/>
</dbReference>
<dbReference type="InterPro" id="IPR003593">
    <property type="entry name" value="AAA+_ATPase"/>
</dbReference>
<dbReference type="InterPro" id="IPR003439">
    <property type="entry name" value="ABC_transporter-like_ATP-bd"/>
</dbReference>
<dbReference type="InterPro" id="IPR017871">
    <property type="entry name" value="ABC_transporter-like_CS"/>
</dbReference>
<dbReference type="InterPro" id="IPR043926">
    <property type="entry name" value="ABCG_dom"/>
</dbReference>
<dbReference type="InterPro" id="IPR050352">
    <property type="entry name" value="ABCG_transporters"/>
</dbReference>
<dbReference type="InterPro" id="IPR027417">
    <property type="entry name" value="P-loop_NTPase"/>
</dbReference>
<dbReference type="PANTHER" id="PTHR48041">
    <property type="entry name" value="ABC TRANSPORTER G FAMILY MEMBER 28"/>
    <property type="match status" value="1"/>
</dbReference>
<dbReference type="PANTHER" id="PTHR48041:SF91">
    <property type="entry name" value="ABC TRANSPORTER G FAMILY MEMBER 28"/>
    <property type="match status" value="1"/>
</dbReference>
<dbReference type="Pfam" id="PF19055">
    <property type="entry name" value="ABC2_membrane_7"/>
    <property type="match status" value="1"/>
</dbReference>
<dbReference type="Pfam" id="PF00005">
    <property type="entry name" value="ABC_tran"/>
    <property type="match status" value="1"/>
</dbReference>
<dbReference type="SMART" id="SM00382">
    <property type="entry name" value="AAA"/>
    <property type="match status" value="1"/>
</dbReference>
<dbReference type="SUPFAM" id="SSF52540">
    <property type="entry name" value="P-loop containing nucleoside triphosphate hydrolases"/>
    <property type="match status" value="1"/>
</dbReference>
<dbReference type="PROSITE" id="PS00211">
    <property type="entry name" value="ABC_TRANSPORTER_1"/>
    <property type="match status" value="1"/>
</dbReference>
<dbReference type="PROSITE" id="PS50893">
    <property type="entry name" value="ABC_TRANSPORTER_2"/>
    <property type="match status" value="1"/>
</dbReference>
<proteinExistence type="inferred from homology"/>
<sequence length="1109" mass="123342">MGRRNSYFPGNFVPLFFVFIVLILQQERVICQEDRSLDNPAANRLYNQFVFDKISNLTEVFEDDIKRELGFCITNVKEDYNEAFNFSTKPDFLNACGKTTKGDMMQRICTAAEVRIYFNGLLGGAKRATNYLKPNKNCNLSSWMSGCEPGWACRTAKDVKVDLKDDKNVPVRTQQCAPCCAGFFCPRGITCMIPCPLGAYCPEANLNRTTGLCDPYHYQLPSGQPNHTCGGADIWADIGSSSEVFCSAGSFCPSTIDKLPCTKGHYCRTGSTAELNCFKLATCNPRSTNQNITAYGIMLFAGLGFLLIILYNCSDQVLATRERRQAKSREKAVQSVRDSQSREKWKSAKDIAKKHATELQQSFSRTFSRRKSMKQPDLMRGLSQAKPGSDAALPPMLGSSSDTKKGKKKEKNKLTEMLHDIEQNPEDPEGFNLEIGDKNIKKHAPKGKALHTQSQMFRYAYGQIEKEKAMQEQNKNLTFSGVISMANDIDIRKRPMIEVAFKDLSITLKGKNKHLMRCVTGKLSPGRVSAVMGPSGAGKTTFLTALTGKAPGCIMTGMILVNGKVESIQSYKKIIGFVPQDDIVHGNLTVEENLWFSARCRLPADLPKPEKVLVVERVIESLGLQHVRDSLVGTVEKRGISGGQRKRVNVGLEMVMEPSLLILDEPTSGLDSSSSQLLLRALRREALEGVNICMVVHQPSYTLFRMFDDLILLAKGGLICYQGPVKKVEEYFSSLGIVVPERVNPPDYYIDILEGILKPSTSSGVTYKQLPVRWMLHNGYPVPMDMLKSIEGMASSASGENSAHGGSAHGSVVGDDGTSFAGEFWQDVKANVEIKKDNLQNNFSSSGDLSEREVPGVYQQYRYFLGRLGKQRLREARTLAVDYLILLLAGICLGTLAKVSDETFGAMGYTYTVIAVSLLCKITALRSFSLDKLHYWRESRAGMSSLAYFLAKDTVDHFNTIVKPLVYLSMFYFFNNPRSTVTDNYVVLICLVYCVTGIAYTLAILFEPGPAQLWSVLLPVVLTLIATSTNDNKIVDSISELCYTRWALEAFVVSNAQRYKGVWLITRCGSLMENGYNIKHFPRCLVFLTLTGILSRCAAFFCMVTFQKK</sequence>
<feature type="chain" id="PRO_0000240700" description="ABC transporter G family member 28">
    <location>
        <begin position="1"/>
        <end position="1109"/>
    </location>
</feature>
<feature type="transmembrane region" description="Helical" evidence="2">
    <location>
        <begin position="5"/>
        <end position="25"/>
    </location>
</feature>
<feature type="transmembrane region" description="Helical" evidence="2">
    <location>
        <begin position="291"/>
        <end position="311"/>
    </location>
</feature>
<feature type="transmembrane region" description="Helical" evidence="2">
    <location>
        <begin position="879"/>
        <end position="899"/>
    </location>
</feature>
<feature type="transmembrane region" description="Helical" evidence="2">
    <location>
        <begin position="904"/>
        <end position="924"/>
    </location>
</feature>
<feature type="transmembrane region" description="Helical" evidence="2">
    <location>
        <begin position="954"/>
        <end position="974"/>
    </location>
</feature>
<feature type="transmembrane region" description="Helical" evidence="2">
    <location>
        <begin position="986"/>
        <end position="1006"/>
    </location>
</feature>
<feature type="transmembrane region" description="Helical" evidence="2">
    <location>
        <begin position="1008"/>
        <end position="1028"/>
    </location>
</feature>
<feature type="transmembrane region" description="Helical" evidence="2">
    <location>
        <begin position="1084"/>
        <end position="1104"/>
    </location>
</feature>
<feature type="domain" description="ABC transporter" evidence="3">
    <location>
        <begin position="499"/>
        <end position="741"/>
    </location>
</feature>
<feature type="domain" description="ABC transmembrane type-2">
    <location>
        <begin position="859"/>
        <end position="1056"/>
    </location>
</feature>
<feature type="region of interest" description="Disordered" evidence="4">
    <location>
        <begin position="325"/>
        <end position="411"/>
    </location>
</feature>
<feature type="compositionally biased region" description="Basic and acidic residues" evidence="4">
    <location>
        <begin position="339"/>
        <end position="357"/>
    </location>
</feature>
<feature type="binding site" evidence="3">
    <location>
        <begin position="533"/>
        <end position="540"/>
    </location>
    <ligand>
        <name>ATP</name>
        <dbReference type="ChEBI" id="CHEBI:30616"/>
    </ligand>
</feature>
<evidence type="ECO:0000250" key="1"/>
<evidence type="ECO:0000255" key="2"/>
<evidence type="ECO:0000255" key="3">
    <source>
        <dbReference type="PROSITE-ProRule" id="PRU00434"/>
    </source>
</evidence>
<evidence type="ECO:0000256" key="4">
    <source>
        <dbReference type="SAM" id="MobiDB-lite"/>
    </source>
</evidence>
<evidence type="ECO:0000305" key="5"/>